<name>CITX_SHISS</name>
<gene>
    <name evidence="1" type="primary">citX</name>
    <name type="ordered locus">SSON_0566</name>
</gene>
<organism>
    <name type="scientific">Shigella sonnei (strain Ss046)</name>
    <dbReference type="NCBI Taxonomy" id="300269"/>
    <lineage>
        <taxon>Bacteria</taxon>
        <taxon>Pseudomonadati</taxon>
        <taxon>Pseudomonadota</taxon>
        <taxon>Gammaproteobacteria</taxon>
        <taxon>Enterobacterales</taxon>
        <taxon>Enterobacteriaceae</taxon>
        <taxon>Shigella</taxon>
    </lineage>
</organism>
<proteinExistence type="inferred from homology"/>
<feature type="chain" id="PRO_1000049605" description="Apo-citrate lyase phosphoribosyl-dephospho-CoA transferase">
    <location>
        <begin position="1"/>
        <end position="183"/>
    </location>
</feature>
<keyword id="KW-0548">Nucleotidyltransferase</keyword>
<keyword id="KW-1185">Reference proteome</keyword>
<keyword id="KW-0808">Transferase</keyword>
<evidence type="ECO:0000255" key="1">
    <source>
        <dbReference type="HAMAP-Rule" id="MF_00398"/>
    </source>
</evidence>
<comment type="function">
    <text evidence="1">Transfers 2-(5''-triphosphoribosyl)-3'-dephosphocoenzyme-A on a serine residue to the apo-acyl carrier protein (gamma chain) of the citrate lyase to yield holo-acyl carrier protein.</text>
</comment>
<comment type="catalytic activity">
    <reaction evidence="1">
        <text>apo-[citrate lyase ACP] + 2'-(5''-triphospho-alpha-D-ribosyl)-3'-dephospho-CoA = holo-[citrate lyase ACP] + diphosphate</text>
        <dbReference type="Rhea" id="RHEA:16333"/>
        <dbReference type="Rhea" id="RHEA-COMP:10157"/>
        <dbReference type="Rhea" id="RHEA-COMP:10158"/>
        <dbReference type="ChEBI" id="CHEBI:29999"/>
        <dbReference type="ChEBI" id="CHEBI:33019"/>
        <dbReference type="ChEBI" id="CHEBI:61378"/>
        <dbReference type="ChEBI" id="CHEBI:82683"/>
        <dbReference type="EC" id="2.7.7.61"/>
    </reaction>
</comment>
<comment type="similarity">
    <text evidence="1">Belongs to the CitX family.</text>
</comment>
<reference key="1">
    <citation type="journal article" date="2005" name="Nucleic Acids Res.">
        <title>Genome dynamics and diversity of Shigella species, the etiologic agents of bacillary dysentery.</title>
        <authorList>
            <person name="Yang F."/>
            <person name="Yang J."/>
            <person name="Zhang X."/>
            <person name="Chen L."/>
            <person name="Jiang Y."/>
            <person name="Yan Y."/>
            <person name="Tang X."/>
            <person name="Wang J."/>
            <person name="Xiong Z."/>
            <person name="Dong J."/>
            <person name="Xue Y."/>
            <person name="Zhu Y."/>
            <person name="Xu X."/>
            <person name="Sun L."/>
            <person name="Chen S."/>
            <person name="Nie H."/>
            <person name="Peng J."/>
            <person name="Xu J."/>
            <person name="Wang Y."/>
            <person name="Yuan Z."/>
            <person name="Wen Y."/>
            <person name="Yao Z."/>
            <person name="Shen Y."/>
            <person name="Qiang B."/>
            <person name="Hou Y."/>
            <person name="Yu J."/>
            <person name="Jin Q."/>
        </authorList>
    </citation>
    <scope>NUCLEOTIDE SEQUENCE [LARGE SCALE GENOMIC DNA]</scope>
    <source>
        <strain>Ss046</strain>
    </source>
</reference>
<sequence>MHLLPELASHHAVSIPELLVSRDERQARQHVWLKRHPVPLVSFTVVAPGPIKDSEVTRRIFNHGVTALRALAAKQGWQIQEQAALVSASGPEGMLSIAAPARDLKLATIELEHSHPLGRLWDIDVLTPEGEILSRRDYSLPPRRCLLCEQSAAVCARGKTHQLTDLLNRMEALLNDVDACNVN</sequence>
<accession>Q3Z4H9</accession>
<protein>
    <recommendedName>
        <fullName>Apo-citrate lyase phosphoribosyl-dephospho-CoA transferase</fullName>
        <ecNumber evidence="1">2.7.7.61</ecNumber>
    </recommendedName>
    <alternativeName>
        <fullName evidence="1">Apo-ACP nucleodityltransferase</fullName>
    </alternativeName>
    <alternativeName>
        <fullName evidence="1">Holo-ACP synthase</fullName>
    </alternativeName>
    <alternativeName>
        <fullName evidence="1">Holo-citrate lyase synthase</fullName>
    </alternativeName>
</protein>
<dbReference type="EC" id="2.7.7.61" evidence="1"/>
<dbReference type="EMBL" id="CP000038">
    <property type="protein sequence ID" value="AAZ87333.1"/>
    <property type="molecule type" value="Genomic_DNA"/>
</dbReference>
<dbReference type="RefSeq" id="WP_000550422.1">
    <property type="nucleotide sequence ID" value="NC_007384.1"/>
</dbReference>
<dbReference type="SMR" id="Q3Z4H9"/>
<dbReference type="GeneID" id="93776871"/>
<dbReference type="KEGG" id="ssn:SSON_0566"/>
<dbReference type="HOGENOM" id="CLU_104529_1_1_6"/>
<dbReference type="Proteomes" id="UP000002529">
    <property type="component" value="Chromosome"/>
</dbReference>
<dbReference type="GO" id="GO:0050519">
    <property type="term" value="F:holo-citrate lyase synthase activity"/>
    <property type="evidence" value="ECO:0007669"/>
    <property type="project" value="UniProtKB-UniRule"/>
</dbReference>
<dbReference type="GO" id="GO:0051191">
    <property type="term" value="P:prosthetic group biosynthetic process"/>
    <property type="evidence" value="ECO:0007669"/>
    <property type="project" value="InterPro"/>
</dbReference>
<dbReference type="HAMAP" id="MF_00398">
    <property type="entry name" value="CitX"/>
    <property type="match status" value="1"/>
</dbReference>
<dbReference type="InterPro" id="IPR005551">
    <property type="entry name" value="CitX"/>
</dbReference>
<dbReference type="NCBIfam" id="TIGR03124">
    <property type="entry name" value="citrate_citX"/>
    <property type="match status" value="1"/>
</dbReference>
<dbReference type="NCBIfam" id="NF002383">
    <property type="entry name" value="PRK01392.1"/>
    <property type="match status" value="1"/>
</dbReference>
<dbReference type="Pfam" id="PF03802">
    <property type="entry name" value="CitX"/>
    <property type="match status" value="1"/>
</dbReference>